<organism>
    <name type="scientific">Pseudomonas savastanoi pv. phaseolicola (strain 1448A / Race 6)</name>
    <name type="common">Pseudomonas syringae pv. phaseolicola (strain 1448A / Race 6)</name>
    <dbReference type="NCBI Taxonomy" id="264730"/>
    <lineage>
        <taxon>Bacteria</taxon>
        <taxon>Pseudomonadati</taxon>
        <taxon>Pseudomonadota</taxon>
        <taxon>Gammaproteobacteria</taxon>
        <taxon>Pseudomonadales</taxon>
        <taxon>Pseudomonadaceae</taxon>
        <taxon>Pseudomonas</taxon>
    </lineage>
</organism>
<feature type="chain" id="PRO_1000048248" description="Cytidylate kinase">
    <location>
        <begin position="1"/>
        <end position="229"/>
    </location>
</feature>
<feature type="binding site" evidence="1">
    <location>
        <begin position="12"/>
        <end position="20"/>
    </location>
    <ligand>
        <name>ATP</name>
        <dbReference type="ChEBI" id="CHEBI:30616"/>
    </ligand>
</feature>
<name>KCY_PSE14</name>
<gene>
    <name evidence="1" type="primary">cmk</name>
    <name type="ordered locus">PSPPH_3663</name>
</gene>
<sequence>MKIKAPVITIDGPSGSGKGTVAGLLARKLGWCLLDSGALYRLLAFAARNHGVDLTNEEALKLLAAHLDVQFEATAAGQGQRIILEGEDVTHAIRNEQVGSGASQVASLPAVRDALLLRQRAFQEEPGLVADGRDMGTVVFPDAPLKIFLTASAEERARRRYLQLKAKGDDVSLSSLLDEICARDERDTQRAVAPLKPAHDAIQLDSTELSIEQVLERILSEIALRGIAG</sequence>
<comment type="catalytic activity">
    <reaction evidence="1">
        <text>CMP + ATP = CDP + ADP</text>
        <dbReference type="Rhea" id="RHEA:11600"/>
        <dbReference type="ChEBI" id="CHEBI:30616"/>
        <dbReference type="ChEBI" id="CHEBI:58069"/>
        <dbReference type="ChEBI" id="CHEBI:60377"/>
        <dbReference type="ChEBI" id="CHEBI:456216"/>
        <dbReference type="EC" id="2.7.4.25"/>
    </reaction>
</comment>
<comment type="catalytic activity">
    <reaction evidence="1">
        <text>dCMP + ATP = dCDP + ADP</text>
        <dbReference type="Rhea" id="RHEA:25094"/>
        <dbReference type="ChEBI" id="CHEBI:30616"/>
        <dbReference type="ChEBI" id="CHEBI:57566"/>
        <dbReference type="ChEBI" id="CHEBI:58593"/>
        <dbReference type="ChEBI" id="CHEBI:456216"/>
        <dbReference type="EC" id="2.7.4.25"/>
    </reaction>
</comment>
<comment type="subcellular location">
    <subcellularLocation>
        <location evidence="1">Cytoplasm</location>
    </subcellularLocation>
</comment>
<comment type="similarity">
    <text evidence="1">Belongs to the cytidylate kinase family. Type 1 subfamily.</text>
</comment>
<protein>
    <recommendedName>
        <fullName evidence="1">Cytidylate kinase</fullName>
        <shortName evidence="1">CK</shortName>
        <ecNumber evidence="1">2.7.4.25</ecNumber>
    </recommendedName>
    <alternativeName>
        <fullName evidence="1">Cytidine monophosphate kinase</fullName>
        <shortName evidence="1">CMP kinase</shortName>
    </alternativeName>
</protein>
<dbReference type="EC" id="2.7.4.25" evidence="1"/>
<dbReference type="EMBL" id="CP000058">
    <property type="protein sequence ID" value="AAZ37828.1"/>
    <property type="molecule type" value="Genomic_DNA"/>
</dbReference>
<dbReference type="RefSeq" id="WP_002554563.1">
    <property type="nucleotide sequence ID" value="NC_005773.3"/>
</dbReference>
<dbReference type="SMR" id="Q48FN1"/>
<dbReference type="GeneID" id="69860684"/>
<dbReference type="KEGG" id="psp:PSPPH_3663"/>
<dbReference type="eggNOG" id="COG0283">
    <property type="taxonomic scope" value="Bacteria"/>
</dbReference>
<dbReference type="HOGENOM" id="CLU_079959_0_2_6"/>
<dbReference type="Proteomes" id="UP000000551">
    <property type="component" value="Chromosome"/>
</dbReference>
<dbReference type="GO" id="GO:0005829">
    <property type="term" value="C:cytosol"/>
    <property type="evidence" value="ECO:0007669"/>
    <property type="project" value="TreeGrafter"/>
</dbReference>
<dbReference type="GO" id="GO:0005524">
    <property type="term" value="F:ATP binding"/>
    <property type="evidence" value="ECO:0007669"/>
    <property type="project" value="UniProtKB-UniRule"/>
</dbReference>
<dbReference type="GO" id="GO:0036430">
    <property type="term" value="F:CMP kinase activity"/>
    <property type="evidence" value="ECO:0007669"/>
    <property type="project" value="RHEA"/>
</dbReference>
<dbReference type="GO" id="GO:0036431">
    <property type="term" value="F:dCMP kinase activity"/>
    <property type="evidence" value="ECO:0007669"/>
    <property type="project" value="RHEA"/>
</dbReference>
<dbReference type="GO" id="GO:0015949">
    <property type="term" value="P:nucleobase-containing small molecule interconversion"/>
    <property type="evidence" value="ECO:0007669"/>
    <property type="project" value="TreeGrafter"/>
</dbReference>
<dbReference type="GO" id="GO:0006220">
    <property type="term" value="P:pyrimidine nucleotide metabolic process"/>
    <property type="evidence" value="ECO:0007669"/>
    <property type="project" value="UniProtKB-UniRule"/>
</dbReference>
<dbReference type="CDD" id="cd02020">
    <property type="entry name" value="CMPK"/>
    <property type="match status" value="1"/>
</dbReference>
<dbReference type="FunFam" id="3.40.50.300:FF:000262">
    <property type="entry name" value="Cytidylate kinase"/>
    <property type="match status" value="1"/>
</dbReference>
<dbReference type="Gene3D" id="3.40.50.300">
    <property type="entry name" value="P-loop containing nucleotide triphosphate hydrolases"/>
    <property type="match status" value="1"/>
</dbReference>
<dbReference type="HAMAP" id="MF_00238">
    <property type="entry name" value="Cytidyl_kinase_type1"/>
    <property type="match status" value="1"/>
</dbReference>
<dbReference type="InterPro" id="IPR003136">
    <property type="entry name" value="Cytidylate_kin"/>
</dbReference>
<dbReference type="InterPro" id="IPR011994">
    <property type="entry name" value="Cytidylate_kinase_dom"/>
</dbReference>
<dbReference type="InterPro" id="IPR027417">
    <property type="entry name" value="P-loop_NTPase"/>
</dbReference>
<dbReference type="NCBIfam" id="TIGR00017">
    <property type="entry name" value="cmk"/>
    <property type="match status" value="1"/>
</dbReference>
<dbReference type="PANTHER" id="PTHR21299:SF2">
    <property type="entry name" value="CYTIDYLATE KINASE"/>
    <property type="match status" value="1"/>
</dbReference>
<dbReference type="PANTHER" id="PTHR21299">
    <property type="entry name" value="CYTIDYLATE KINASE/PANTOATE-BETA-ALANINE LIGASE"/>
    <property type="match status" value="1"/>
</dbReference>
<dbReference type="Pfam" id="PF02224">
    <property type="entry name" value="Cytidylate_kin"/>
    <property type="match status" value="1"/>
</dbReference>
<dbReference type="SUPFAM" id="SSF52540">
    <property type="entry name" value="P-loop containing nucleoside triphosphate hydrolases"/>
    <property type="match status" value="1"/>
</dbReference>
<accession>Q48FN1</accession>
<keyword id="KW-0067">ATP-binding</keyword>
<keyword id="KW-0963">Cytoplasm</keyword>
<keyword id="KW-0418">Kinase</keyword>
<keyword id="KW-0547">Nucleotide-binding</keyword>
<keyword id="KW-0808">Transferase</keyword>
<proteinExistence type="inferred from homology"/>
<reference key="1">
    <citation type="journal article" date="2005" name="J. Bacteriol.">
        <title>Whole-genome sequence analysis of Pseudomonas syringae pv. phaseolicola 1448A reveals divergence among pathovars in genes involved in virulence and transposition.</title>
        <authorList>
            <person name="Joardar V."/>
            <person name="Lindeberg M."/>
            <person name="Jackson R.W."/>
            <person name="Selengut J."/>
            <person name="Dodson R."/>
            <person name="Brinkac L.M."/>
            <person name="Daugherty S.C."/>
            <person name="DeBoy R.T."/>
            <person name="Durkin A.S."/>
            <person name="Gwinn Giglio M."/>
            <person name="Madupu R."/>
            <person name="Nelson W.C."/>
            <person name="Rosovitz M.J."/>
            <person name="Sullivan S.A."/>
            <person name="Crabtree J."/>
            <person name="Creasy T."/>
            <person name="Davidsen T.M."/>
            <person name="Haft D.H."/>
            <person name="Zafar N."/>
            <person name="Zhou L."/>
            <person name="Halpin R."/>
            <person name="Holley T."/>
            <person name="Khouri H.M."/>
            <person name="Feldblyum T.V."/>
            <person name="White O."/>
            <person name="Fraser C.M."/>
            <person name="Chatterjee A.K."/>
            <person name="Cartinhour S."/>
            <person name="Schneider D."/>
            <person name="Mansfield J.W."/>
            <person name="Collmer A."/>
            <person name="Buell R."/>
        </authorList>
    </citation>
    <scope>NUCLEOTIDE SEQUENCE [LARGE SCALE GENOMIC DNA]</scope>
    <source>
        <strain>1448A / Race 6</strain>
    </source>
</reference>
<evidence type="ECO:0000255" key="1">
    <source>
        <dbReference type="HAMAP-Rule" id="MF_00238"/>
    </source>
</evidence>